<dbReference type="EMBL" id="HQ026144">
    <property type="protein sequence ID" value="ADM34243.1"/>
    <property type="molecule type" value="mRNA"/>
</dbReference>
<dbReference type="GO" id="GO:0005576">
    <property type="term" value="C:extracellular region"/>
    <property type="evidence" value="ECO:0007669"/>
    <property type="project" value="UniProtKB-SubCell"/>
</dbReference>
<dbReference type="GO" id="GO:0042742">
    <property type="term" value="P:defense response to bacterium"/>
    <property type="evidence" value="ECO:0007669"/>
    <property type="project" value="UniProtKB-KW"/>
</dbReference>
<dbReference type="GO" id="GO:0031640">
    <property type="term" value="P:killing of cells of another organism"/>
    <property type="evidence" value="ECO:0007669"/>
    <property type="project" value="UniProtKB-KW"/>
</dbReference>
<dbReference type="InterPro" id="IPR004275">
    <property type="entry name" value="Frog_antimicrobial_propeptide"/>
</dbReference>
<dbReference type="Pfam" id="PF03032">
    <property type="entry name" value="FSAP_sig_propep"/>
    <property type="match status" value="1"/>
</dbReference>
<protein>
    <recommendedName>
        <fullName evidence="3">Amolopin-p-MT1</fullName>
    </recommendedName>
</protein>
<keyword id="KW-0878">Amphibian defense peptide</keyword>
<keyword id="KW-0044">Antibiotic</keyword>
<keyword id="KW-0929">Antimicrobial</keyword>
<keyword id="KW-0165">Cleavage on pair of basic residues</keyword>
<keyword id="KW-0204">Cytolysis</keyword>
<keyword id="KW-0903">Direct protein sequencing</keyword>
<keyword id="KW-0354">Hemolysis</keyword>
<keyword id="KW-0964">Secreted</keyword>
<keyword id="KW-0732">Signal</keyword>
<accession>E1AXF9</accession>
<reference evidence="6" key="1">
    <citation type="journal article" date="2014" name="Zool. Sci.">
        <title>Peptidomic analysis of antimicrobial peptides in skin secretions of Amolops mantzorum.</title>
        <authorList>
            <person name="Hu Y."/>
            <person name="Yu Z."/>
            <person name="Xu S."/>
            <person name="Hu Y."/>
            <person name="Guo C."/>
            <person name="Li F."/>
            <person name="Li J."/>
            <person name="Liu J."/>
            <person name="Wang H."/>
        </authorList>
    </citation>
    <scope>NUCLEOTIDE SEQUENCE [MRNA]</scope>
    <scope>PROTEIN SEQUENCE OF 45-62</scope>
    <scope>FUNCTION</scope>
    <scope>SUBCELLULAR LOCATION</scope>
    <scope>SYNTHESIS OF 45-62</scope>
    <scope>IDENTIFICATION BY MASS SPECTROMETRY</scope>
    <source>
        <tissue evidence="3">Skin</tissue>
        <tissue evidence="3">Skin secretion</tissue>
    </source>
</reference>
<name>APMT1_AMOMA</name>
<feature type="signal peptide" evidence="1">
    <location>
        <begin position="1"/>
        <end position="22"/>
    </location>
</feature>
<feature type="propeptide" id="PRO_0000440072" description="Removed in mature form" evidence="5">
    <location>
        <begin position="23"/>
        <end position="42"/>
    </location>
</feature>
<feature type="peptide" id="PRO_0000440073" description="Amolopin-p-MT1" evidence="2">
    <location>
        <begin position="45"/>
        <end position="62"/>
    </location>
</feature>
<proteinExistence type="evidence at protein level"/>
<evidence type="ECO:0000255" key="1"/>
<evidence type="ECO:0000269" key="2">
    <source>
    </source>
</evidence>
<evidence type="ECO:0000303" key="3">
    <source>
    </source>
</evidence>
<evidence type="ECO:0000305" key="4"/>
<evidence type="ECO:0000305" key="5">
    <source>
    </source>
</evidence>
<evidence type="ECO:0000312" key="6">
    <source>
        <dbReference type="EMBL" id="ADM34243.1"/>
    </source>
</evidence>
<organism evidence="6">
    <name type="scientific">Amolops mantzorum</name>
    <name type="common">Sichuan torrent frog</name>
    <dbReference type="NCBI Taxonomy" id="167930"/>
    <lineage>
        <taxon>Eukaryota</taxon>
        <taxon>Metazoa</taxon>
        <taxon>Chordata</taxon>
        <taxon>Craniata</taxon>
        <taxon>Vertebrata</taxon>
        <taxon>Euteleostomi</taxon>
        <taxon>Amphibia</taxon>
        <taxon>Batrachia</taxon>
        <taxon>Anura</taxon>
        <taxon>Neobatrachia</taxon>
        <taxon>Ranoidea</taxon>
        <taxon>Ranidae</taxon>
        <taxon>Amolops</taxon>
    </lineage>
</organism>
<comment type="function">
    <text evidence="2">Antimicrobial peptide. Active against a variety of Gram-negative and Gram-positive bacterial strains. Not active against fungi. Shows weak hemolytic activity against human erythrocytes.</text>
</comment>
<comment type="subcellular location">
    <subcellularLocation>
        <location evidence="1 2">Secreted</location>
    </subcellularLocation>
</comment>
<comment type="tissue specificity">
    <text evidence="5">Expressed by the skin glands.</text>
</comment>
<comment type="similarity">
    <text evidence="4">Belongs to the frog skin active peptide (FSAP) family. Brevinin subfamily.</text>
</comment>
<sequence>MFTLKKSLLLLFFLGTISLSLCEQERGADEEENGGEVTEEEVKRNILSGIANGINRVLSWFG</sequence>